<accession>C1AGD0</accession>
<name>DNLJ_MYCBT</name>
<feature type="chain" id="PRO_0000380426" description="DNA ligase">
    <location>
        <begin position="1"/>
        <end position="691"/>
    </location>
</feature>
<feature type="domain" description="BRCT" evidence="1">
    <location>
        <begin position="607"/>
        <end position="691"/>
    </location>
</feature>
<feature type="active site" description="N6-AMP-lysine intermediate" evidence="1">
    <location>
        <position position="123"/>
    </location>
</feature>
<feature type="binding site" evidence="1">
    <location>
        <begin position="41"/>
        <end position="45"/>
    </location>
    <ligand>
        <name>NAD(+)</name>
        <dbReference type="ChEBI" id="CHEBI:57540"/>
    </ligand>
</feature>
<feature type="binding site" evidence="1">
    <location>
        <begin position="91"/>
        <end position="92"/>
    </location>
    <ligand>
        <name>NAD(+)</name>
        <dbReference type="ChEBI" id="CHEBI:57540"/>
    </ligand>
</feature>
<feature type="binding site" evidence="1">
    <location>
        <position position="121"/>
    </location>
    <ligand>
        <name>NAD(+)</name>
        <dbReference type="ChEBI" id="CHEBI:57540"/>
    </ligand>
</feature>
<feature type="binding site" evidence="1">
    <location>
        <position position="144"/>
    </location>
    <ligand>
        <name>NAD(+)</name>
        <dbReference type="ChEBI" id="CHEBI:57540"/>
    </ligand>
</feature>
<feature type="binding site" evidence="1">
    <location>
        <position position="184"/>
    </location>
    <ligand>
        <name>NAD(+)</name>
        <dbReference type="ChEBI" id="CHEBI:57540"/>
    </ligand>
</feature>
<feature type="binding site" evidence="1">
    <location>
        <position position="300"/>
    </location>
    <ligand>
        <name>NAD(+)</name>
        <dbReference type="ChEBI" id="CHEBI:57540"/>
    </ligand>
</feature>
<feature type="binding site" evidence="1">
    <location>
        <position position="324"/>
    </location>
    <ligand>
        <name>NAD(+)</name>
        <dbReference type="ChEBI" id="CHEBI:57540"/>
    </ligand>
</feature>
<feature type="binding site" evidence="1">
    <location>
        <position position="418"/>
    </location>
    <ligand>
        <name>Zn(2+)</name>
        <dbReference type="ChEBI" id="CHEBI:29105"/>
    </ligand>
</feature>
<feature type="binding site" evidence="1">
    <location>
        <position position="421"/>
    </location>
    <ligand>
        <name>Zn(2+)</name>
        <dbReference type="ChEBI" id="CHEBI:29105"/>
    </ligand>
</feature>
<feature type="binding site" evidence="1">
    <location>
        <position position="437"/>
    </location>
    <ligand>
        <name>Zn(2+)</name>
        <dbReference type="ChEBI" id="CHEBI:29105"/>
    </ligand>
</feature>
<feature type="binding site" evidence="1">
    <location>
        <position position="443"/>
    </location>
    <ligand>
        <name>Zn(2+)</name>
        <dbReference type="ChEBI" id="CHEBI:29105"/>
    </ligand>
</feature>
<proteinExistence type="inferred from homology"/>
<organism>
    <name type="scientific">Mycobacterium bovis (strain BCG / Tokyo 172 / ATCC 35737 / TMC 1019)</name>
    <dbReference type="NCBI Taxonomy" id="561275"/>
    <lineage>
        <taxon>Bacteria</taxon>
        <taxon>Bacillati</taxon>
        <taxon>Actinomycetota</taxon>
        <taxon>Actinomycetes</taxon>
        <taxon>Mycobacteriales</taxon>
        <taxon>Mycobacteriaceae</taxon>
        <taxon>Mycobacterium</taxon>
        <taxon>Mycobacterium tuberculosis complex</taxon>
    </lineage>
</organism>
<sequence>MSSPDADQTAPEVLRQWQALAEEVREHQFRYYVRDAPIISDAEFDELLRRLEALEEQHPELRTPDSPTQLVGGAGFATDFEPVDHLERMLSLDNAFTADELAAWAGRIHAEVGDAAHYLCELKIDGVALSLVYREGRLTRASTRGDGRTGEDVTLNARTIADVPERLTPGDDYPVPEVLEVRGEVFFRLDDFQALNASLVEEGKAPFANPRNSAAGSLRQKDPAVTARRRLRMICHGLGHVEGFRPATLHQAYLALRAWGLPVSEHTTLATDLAGVRERIDYWGEHRHEVDHEIDGVVVKVDEVALQRRLGSTSRAPRWAIAYKYPPEEAQTKLLDIRVNVGRTGRITPFAFMTPVKVAGSTVGQATLHNASEIKRKGVLIGDTVVIRKAGDVIPEVLGPVVELRDGSEREFIMPTTCPECGSPLAPEKEGDADIRCPNARGCPGQLRERVFHVASRNGLDIEVLGYEAGVALLQAKVIADEGELFALTERDLLRTDLFRTKAGELSANGKRLLVNLDKAKAAPLWRVLVALSIRHVGPTAARALATEFGSLDAIAAASTDQLAAVEGVGPTIAAAVTEWFAVDWHREIVDKWRAAGVRMVDERDESVPRTLAGLTIVVTGSLTGFSRDDAKEAIVARGGKAAGSVSKKTNYVVAGDSPGSKYDKAVELGVPILDEDGFRRLLADGPASRT</sequence>
<evidence type="ECO:0000255" key="1">
    <source>
        <dbReference type="HAMAP-Rule" id="MF_01588"/>
    </source>
</evidence>
<comment type="function">
    <text evidence="1">DNA ligase that catalyzes the formation of phosphodiester linkages between 5'-phosphoryl and 3'-hydroxyl groups in double-stranded DNA using NAD as a coenzyme and as the energy source for the reaction. It is essential for DNA replication and repair of damaged DNA.</text>
</comment>
<comment type="catalytic activity">
    <reaction evidence="1">
        <text>NAD(+) + (deoxyribonucleotide)n-3'-hydroxyl + 5'-phospho-(deoxyribonucleotide)m = (deoxyribonucleotide)n+m + AMP + beta-nicotinamide D-nucleotide.</text>
        <dbReference type="EC" id="6.5.1.2"/>
    </reaction>
</comment>
<comment type="cofactor">
    <cofactor evidence="1">
        <name>Mg(2+)</name>
        <dbReference type="ChEBI" id="CHEBI:18420"/>
    </cofactor>
    <cofactor evidence="1">
        <name>Mn(2+)</name>
        <dbReference type="ChEBI" id="CHEBI:29035"/>
    </cofactor>
</comment>
<comment type="similarity">
    <text evidence="1">Belongs to the NAD-dependent DNA ligase family. LigA subfamily.</text>
</comment>
<protein>
    <recommendedName>
        <fullName evidence="1">DNA ligase</fullName>
        <ecNumber evidence="1">6.5.1.2</ecNumber>
    </recommendedName>
    <alternativeName>
        <fullName evidence="1">Polydeoxyribonucleotide synthase [NAD(+)]</fullName>
    </alternativeName>
</protein>
<reference key="1">
    <citation type="journal article" date="2009" name="Vaccine">
        <title>Whole genome sequence analysis of Mycobacterium bovis bacillus Calmette-Guerin (BCG) Tokyo 172: a comparative study of BCG vaccine substrains.</title>
        <authorList>
            <person name="Seki M."/>
            <person name="Honda I."/>
            <person name="Fujita I."/>
            <person name="Yano I."/>
            <person name="Yamamoto S."/>
            <person name="Koyama A."/>
        </authorList>
    </citation>
    <scope>NUCLEOTIDE SEQUENCE [LARGE SCALE GENOMIC DNA]</scope>
    <source>
        <strain>BCG / Tokyo 172 / ATCC 35737 / TMC 1019</strain>
    </source>
</reference>
<gene>
    <name evidence="1" type="primary">ligA</name>
    <name type="ordered locus">JTY_3031</name>
</gene>
<dbReference type="EC" id="6.5.1.2" evidence="1"/>
<dbReference type="EMBL" id="AP010918">
    <property type="protein sequence ID" value="BAH27309.1"/>
    <property type="molecule type" value="Genomic_DNA"/>
</dbReference>
<dbReference type="RefSeq" id="WP_003415263.1">
    <property type="nucleotide sequence ID" value="NZ_CP014566.1"/>
</dbReference>
<dbReference type="SMR" id="C1AGD0"/>
<dbReference type="KEGG" id="mbt:JTY_3031"/>
<dbReference type="HOGENOM" id="CLU_007764_2_0_11"/>
<dbReference type="GO" id="GO:0005829">
    <property type="term" value="C:cytosol"/>
    <property type="evidence" value="ECO:0007669"/>
    <property type="project" value="TreeGrafter"/>
</dbReference>
<dbReference type="GO" id="GO:0003911">
    <property type="term" value="F:DNA ligase (NAD+) activity"/>
    <property type="evidence" value="ECO:0007669"/>
    <property type="project" value="UniProtKB-UniRule"/>
</dbReference>
<dbReference type="GO" id="GO:0046872">
    <property type="term" value="F:metal ion binding"/>
    <property type="evidence" value="ECO:0007669"/>
    <property type="project" value="UniProtKB-KW"/>
</dbReference>
<dbReference type="GO" id="GO:0006281">
    <property type="term" value="P:DNA repair"/>
    <property type="evidence" value="ECO:0007669"/>
    <property type="project" value="UniProtKB-KW"/>
</dbReference>
<dbReference type="GO" id="GO:0006260">
    <property type="term" value="P:DNA replication"/>
    <property type="evidence" value="ECO:0007669"/>
    <property type="project" value="UniProtKB-KW"/>
</dbReference>
<dbReference type="CDD" id="cd17748">
    <property type="entry name" value="BRCT_DNA_ligase_like"/>
    <property type="match status" value="1"/>
</dbReference>
<dbReference type="CDD" id="cd00114">
    <property type="entry name" value="LIGANc"/>
    <property type="match status" value="1"/>
</dbReference>
<dbReference type="FunFam" id="1.10.150.20:FF:000006">
    <property type="entry name" value="DNA ligase"/>
    <property type="match status" value="1"/>
</dbReference>
<dbReference type="FunFam" id="1.10.150.20:FF:000100">
    <property type="entry name" value="DNA ligase"/>
    <property type="match status" value="1"/>
</dbReference>
<dbReference type="FunFam" id="1.10.287.610:FF:000002">
    <property type="entry name" value="DNA ligase"/>
    <property type="match status" value="1"/>
</dbReference>
<dbReference type="FunFam" id="2.40.50.140:FF:000012">
    <property type="entry name" value="DNA ligase"/>
    <property type="match status" value="1"/>
</dbReference>
<dbReference type="FunFam" id="3.30.470.30:FF:000001">
    <property type="entry name" value="DNA ligase"/>
    <property type="match status" value="1"/>
</dbReference>
<dbReference type="FunFam" id="3.40.50.10190:FF:000054">
    <property type="entry name" value="DNA ligase"/>
    <property type="match status" value="1"/>
</dbReference>
<dbReference type="Gene3D" id="6.20.10.30">
    <property type="match status" value="1"/>
</dbReference>
<dbReference type="Gene3D" id="1.10.150.20">
    <property type="entry name" value="5' to 3' exonuclease, C-terminal subdomain"/>
    <property type="match status" value="2"/>
</dbReference>
<dbReference type="Gene3D" id="3.40.50.10190">
    <property type="entry name" value="BRCT domain"/>
    <property type="match status" value="1"/>
</dbReference>
<dbReference type="Gene3D" id="3.30.470.30">
    <property type="entry name" value="DNA ligase/mRNA capping enzyme"/>
    <property type="match status" value="1"/>
</dbReference>
<dbReference type="Gene3D" id="1.10.287.610">
    <property type="entry name" value="Helix hairpin bin"/>
    <property type="match status" value="1"/>
</dbReference>
<dbReference type="Gene3D" id="2.40.50.140">
    <property type="entry name" value="Nucleic acid-binding proteins"/>
    <property type="match status" value="1"/>
</dbReference>
<dbReference type="HAMAP" id="MF_01588">
    <property type="entry name" value="DNA_ligase_A"/>
    <property type="match status" value="1"/>
</dbReference>
<dbReference type="InterPro" id="IPR001357">
    <property type="entry name" value="BRCT_dom"/>
</dbReference>
<dbReference type="InterPro" id="IPR036420">
    <property type="entry name" value="BRCT_dom_sf"/>
</dbReference>
<dbReference type="InterPro" id="IPR041663">
    <property type="entry name" value="DisA/LigA_HHH"/>
</dbReference>
<dbReference type="InterPro" id="IPR001679">
    <property type="entry name" value="DNA_ligase"/>
</dbReference>
<dbReference type="InterPro" id="IPR018239">
    <property type="entry name" value="DNA_ligase_AS"/>
</dbReference>
<dbReference type="InterPro" id="IPR033136">
    <property type="entry name" value="DNA_ligase_CS"/>
</dbReference>
<dbReference type="InterPro" id="IPR013839">
    <property type="entry name" value="DNAligase_adenylation"/>
</dbReference>
<dbReference type="InterPro" id="IPR013840">
    <property type="entry name" value="DNAligase_N"/>
</dbReference>
<dbReference type="InterPro" id="IPR012340">
    <property type="entry name" value="NA-bd_OB-fold"/>
</dbReference>
<dbReference type="InterPro" id="IPR004150">
    <property type="entry name" value="NAD_DNA_ligase_OB"/>
</dbReference>
<dbReference type="InterPro" id="IPR010994">
    <property type="entry name" value="RuvA_2-like"/>
</dbReference>
<dbReference type="InterPro" id="IPR004149">
    <property type="entry name" value="Znf_DNAligase_C4"/>
</dbReference>
<dbReference type="NCBIfam" id="TIGR00575">
    <property type="entry name" value="dnlj"/>
    <property type="match status" value="1"/>
</dbReference>
<dbReference type="NCBIfam" id="NF005932">
    <property type="entry name" value="PRK07956.1"/>
    <property type="match status" value="1"/>
</dbReference>
<dbReference type="PANTHER" id="PTHR23389">
    <property type="entry name" value="CHROMOSOME TRANSMISSION FIDELITY FACTOR 18"/>
    <property type="match status" value="1"/>
</dbReference>
<dbReference type="PANTHER" id="PTHR23389:SF9">
    <property type="entry name" value="DNA LIGASE"/>
    <property type="match status" value="1"/>
</dbReference>
<dbReference type="Pfam" id="PF00533">
    <property type="entry name" value="BRCT"/>
    <property type="match status" value="1"/>
</dbReference>
<dbReference type="Pfam" id="PF01653">
    <property type="entry name" value="DNA_ligase_aden"/>
    <property type="match status" value="1"/>
</dbReference>
<dbReference type="Pfam" id="PF03120">
    <property type="entry name" value="DNA_ligase_OB"/>
    <property type="match status" value="1"/>
</dbReference>
<dbReference type="Pfam" id="PF03119">
    <property type="entry name" value="DNA_ligase_ZBD"/>
    <property type="match status" value="1"/>
</dbReference>
<dbReference type="Pfam" id="PF12826">
    <property type="entry name" value="HHH_2"/>
    <property type="match status" value="1"/>
</dbReference>
<dbReference type="Pfam" id="PF22745">
    <property type="entry name" value="Nlig-Ia"/>
    <property type="match status" value="1"/>
</dbReference>
<dbReference type="PIRSF" id="PIRSF001604">
    <property type="entry name" value="LigA"/>
    <property type="match status" value="1"/>
</dbReference>
<dbReference type="SMART" id="SM00292">
    <property type="entry name" value="BRCT"/>
    <property type="match status" value="1"/>
</dbReference>
<dbReference type="SMART" id="SM00532">
    <property type="entry name" value="LIGANc"/>
    <property type="match status" value="1"/>
</dbReference>
<dbReference type="SUPFAM" id="SSF52113">
    <property type="entry name" value="BRCT domain"/>
    <property type="match status" value="1"/>
</dbReference>
<dbReference type="SUPFAM" id="SSF56091">
    <property type="entry name" value="DNA ligase/mRNA capping enzyme, catalytic domain"/>
    <property type="match status" value="1"/>
</dbReference>
<dbReference type="SUPFAM" id="SSF50249">
    <property type="entry name" value="Nucleic acid-binding proteins"/>
    <property type="match status" value="1"/>
</dbReference>
<dbReference type="SUPFAM" id="SSF47781">
    <property type="entry name" value="RuvA domain 2-like"/>
    <property type="match status" value="1"/>
</dbReference>
<dbReference type="PROSITE" id="PS50172">
    <property type="entry name" value="BRCT"/>
    <property type="match status" value="1"/>
</dbReference>
<dbReference type="PROSITE" id="PS01055">
    <property type="entry name" value="DNA_LIGASE_N1"/>
    <property type="match status" value="1"/>
</dbReference>
<dbReference type="PROSITE" id="PS01056">
    <property type="entry name" value="DNA_LIGASE_N2"/>
    <property type="match status" value="1"/>
</dbReference>
<keyword id="KW-0227">DNA damage</keyword>
<keyword id="KW-0234">DNA repair</keyword>
<keyword id="KW-0235">DNA replication</keyword>
<keyword id="KW-0436">Ligase</keyword>
<keyword id="KW-0460">Magnesium</keyword>
<keyword id="KW-0464">Manganese</keyword>
<keyword id="KW-0479">Metal-binding</keyword>
<keyword id="KW-0520">NAD</keyword>
<keyword id="KW-0862">Zinc</keyword>